<name>DTD_ALTMD</name>
<gene>
    <name evidence="1" type="primary">dtd</name>
    <name type="ordered locus">MADE_1018350</name>
</gene>
<protein>
    <recommendedName>
        <fullName evidence="1">D-aminoacyl-tRNA deacylase</fullName>
        <shortName evidence="1">DTD</shortName>
        <ecNumber evidence="1">3.1.1.96</ecNumber>
    </recommendedName>
    <alternativeName>
        <fullName evidence="1">Gly-tRNA(Ala) deacylase</fullName>
    </alternativeName>
</protein>
<accession>B4RYB0</accession>
<accession>F2G6A2</accession>
<reference key="1">
    <citation type="journal article" date="2008" name="ISME J.">
        <title>Comparative genomics of two ecotypes of the marine planktonic copiotroph Alteromonas macleodii suggests alternative lifestyles associated with different kinds of particulate organic matter.</title>
        <authorList>
            <person name="Ivars-Martinez E."/>
            <person name="Martin-Cuadrado A.-B."/>
            <person name="D'Auria G."/>
            <person name="Mira A."/>
            <person name="Ferriera S."/>
            <person name="Johnson J."/>
            <person name="Friedman R."/>
            <person name="Rodriguez-Valera F."/>
        </authorList>
    </citation>
    <scope>NUCLEOTIDE SEQUENCE [LARGE SCALE GENOMIC DNA]</scope>
    <source>
        <strain>DSM 17117 / CIP 110805 / LMG 28347 / Deep ecotype</strain>
    </source>
</reference>
<organism>
    <name type="scientific">Alteromonas mediterranea (strain DSM 17117 / CIP 110805 / LMG 28347 / Deep ecotype)</name>
    <dbReference type="NCBI Taxonomy" id="1774373"/>
    <lineage>
        <taxon>Bacteria</taxon>
        <taxon>Pseudomonadati</taxon>
        <taxon>Pseudomonadota</taxon>
        <taxon>Gammaproteobacteria</taxon>
        <taxon>Alteromonadales</taxon>
        <taxon>Alteromonadaceae</taxon>
        <taxon>Alteromonas/Salinimonas group</taxon>
        <taxon>Alteromonas</taxon>
    </lineage>
</organism>
<evidence type="ECO:0000255" key="1">
    <source>
        <dbReference type="HAMAP-Rule" id="MF_00518"/>
    </source>
</evidence>
<dbReference type="EC" id="3.1.1.96" evidence="1"/>
<dbReference type="EMBL" id="CP001103">
    <property type="protein sequence ID" value="AEA99794.1"/>
    <property type="molecule type" value="Genomic_DNA"/>
</dbReference>
<dbReference type="RefSeq" id="WP_012519863.1">
    <property type="nucleotide sequence ID" value="NC_011138.3"/>
</dbReference>
<dbReference type="SMR" id="B4RYB0"/>
<dbReference type="KEGG" id="amc:MADE_1018350"/>
<dbReference type="HOGENOM" id="CLU_076901_1_0_6"/>
<dbReference type="Proteomes" id="UP000001870">
    <property type="component" value="Chromosome"/>
</dbReference>
<dbReference type="GO" id="GO:0005737">
    <property type="term" value="C:cytoplasm"/>
    <property type="evidence" value="ECO:0007669"/>
    <property type="project" value="UniProtKB-SubCell"/>
</dbReference>
<dbReference type="GO" id="GO:0051500">
    <property type="term" value="F:D-tyrosyl-tRNA(Tyr) deacylase activity"/>
    <property type="evidence" value="ECO:0007669"/>
    <property type="project" value="TreeGrafter"/>
</dbReference>
<dbReference type="GO" id="GO:0106026">
    <property type="term" value="F:Gly-tRNA(Ala) deacylase activity"/>
    <property type="evidence" value="ECO:0007669"/>
    <property type="project" value="UniProtKB-UniRule"/>
</dbReference>
<dbReference type="GO" id="GO:0043908">
    <property type="term" value="F:Ser(Gly)-tRNA(Ala) hydrolase activity"/>
    <property type="evidence" value="ECO:0007669"/>
    <property type="project" value="UniProtKB-UniRule"/>
</dbReference>
<dbReference type="GO" id="GO:0000049">
    <property type="term" value="F:tRNA binding"/>
    <property type="evidence" value="ECO:0007669"/>
    <property type="project" value="UniProtKB-UniRule"/>
</dbReference>
<dbReference type="GO" id="GO:0019478">
    <property type="term" value="P:D-amino acid catabolic process"/>
    <property type="evidence" value="ECO:0007669"/>
    <property type="project" value="UniProtKB-UniRule"/>
</dbReference>
<dbReference type="CDD" id="cd00563">
    <property type="entry name" value="Dtyr_deacylase"/>
    <property type="match status" value="1"/>
</dbReference>
<dbReference type="FunFam" id="3.50.80.10:FF:000001">
    <property type="entry name" value="D-aminoacyl-tRNA deacylase"/>
    <property type="match status" value="1"/>
</dbReference>
<dbReference type="Gene3D" id="3.50.80.10">
    <property type="entry name" value="D-tyrosyl-tRNA(Tyr) deacylase"/>
    <property type="match status" value="1"/>
</dbReference>
<dbReference type="HAMAP" id="MF_00518">
    <property type="entry name" value="Deacylase_Dtd"/>
    <property type="match status" value="1"/>
</dbReference>
<dbReference type="InterPro" id="IPR003732">
    <property type="entry name" value="Daa-tRNA_deacyls_DTD"/>
</dbReference>
<dbReference type="InterPro" id="IPR023509">
    <property type="entry name" value="DTD-like_sf"/>
</dbReference>
<dbReference type="NCBIfam" id="TIGR00256">
    <property type="entry name" value="D-aminoacyl-tRNA deacylase"/>
    <property type="match status" value="1"/>
</dbReference>
<dbReference type="PANTHER" id="PTHR10472:SF5">
    <property type="entry name" value="D-AMINOACYL-TRNA DEACYLASE 1"/>
    <property type="match status" value="1"/>
</dbReference>
<dbReference type="PANTHER" id="PTHR10472">
    <property type="entry name" value="D-TYROSYL-TRNA TYR DEACYLASE"/>
    <property type="match status" value="1"/>
</dbReference>
<dbReference type="Pfam" id="PF02580">
    <property type="entry name" value="Tyr_Deacylase"/>
    <property type="match status" value="1"/>
</dbReference>
<dbReference type="SUPFAM" id="SSF69500">
    <property type="entry name" value="DTD-like"/>
    <property type="match status" value="1"/>
</dbReference>
<keyword id="KW-0963">Cytoplasm</keyword>
<keyword id="KW-0378">Hydrolase</keyword>
<keyword id="KW-0694">RNA-binding</keyword>
<keyword id="KW-0820">tRNA-binding</keyword>
<feature type="chain" id="PRO_1000127488" description="D-aminoacyl-tRNA deacylase">
    <location>
        <begin position="1"/>
        <end position="145"/>
    </location>
</feature>
<feature type="short sequence motif" description="Gly-cisPro motif, important for rejection of L-amino acids" evidence="1">
    <location>
        <begin position="137"/>
        <end position="138"/>
    </location>
</feature>
<sequence length="145" mass="15626">MIGLIQRVSEANVTVAGEVIGEIGKGMLVLLGVEKEDGDAEIEKLANKLCRYRMFSDEDGKMNLNIEQVGGEILVVSQFTLVADTQKGNRPGFSRGATPEHGEAIYKKFVHALRAKGMAVSTGEFGADMQVGLVNDGPVTFHFNV</sequence>
<proteinExistence type="inferred from homology"/>
<comment type="function">
    <text evidence="1">An aminoacyl-tRNA editing enzyme that deacylates mischarged D-aminoacyl-tRNAs. Also deacylates mischarged glycyl-tRNA(Ala), protecting cells against glycine mischarging by AlaRS. Acts via tRNA-based rather than protein-based catalysis; rejects L-amino acids rather than detecting D-amino acids in the active site. By recycling D-aminoacyl-tRNA to D-amino acids and free tRNA molecules, this enzyme counteracts the toxicity associated with the formation of D-aminoacyl-tRNA entities in vivo and helps enforce protein L-homochirality.</text>
</comment>
<comment type="catalytic activity">
    <reaction evidence="1">
        <text>glycyl-tRNA(Ala) + H2O = tRNA(Ala) + glycine + H(+)</text>
        <dbReference type="Rhea" id="RHEA:53744"/>
        <dbReference type="Rhea" id="RHEA-COMP:9657"/>
        <dbReference type="Rhea" id="RHEA-COMP:13640"/>
        <dbReference type="ChEBI" id="CHEBI:15377"/>
        <dbReference type="ChEBI" id="CHEBI:15378"/>
        <dbReference type="ChEBI" id="CHEBI:57305"/>
        <dbReference type="ChEBI" id="CHEBI:78442"/>
        <dbReference type="ChEBI" id="CHEBI:78522"/>
        <dbReference type="EC" id="3.1.1.96"/>
    </reaction>
</comment>
<comment type="catalytic activity">
    <reaction evidence="1">
        <text>a D-aminoacyl-tRNA + H2O = a tRNA + a D-alpha-amino acid + H(+)</text>
        <dbReference type="Rhea" id="RHEA:13953"/>
        <dbReference type="Rhea" id="RHEA-COMP:10123"/>
        <dbReference type="Rhea" id="RHEA-COMP:10124"/>
        <dbReference type="ChEBI" id="CHEBI:15377"/>
        <dbReference type="ChEBI" id="CHEBI:15378"/>
        <dbReference type="ChEBI" id="CHEBI:59871"/>
        <dbReference type="ChEBI" id="CHEBI:78442"/>
        <dbReference type="ChEBI" id="CHEBI:79333"/>
        <dbReference type="EC" id="3.1.1.96"/>
    </reaction>
</comment>
<comment type="subunit">
    <text evidence="1">Homodimer.</text>
</comment>
<comment type="subcellular location">
    <subcellularLocation>
        <location evidence="1">Cytoplasm</location>
    </subcellularLocation>
</comment>
<comment type="domain">
    <text evidence="1">A Gly-cisPro motif from one monomer fits into the active site of the other monomer to allow specific chiral rejection of L-amino acids.</text>
</comment>
<comment type="similarity">
    <text evidence="1">Belongs to the DTD family.</text>
</comment>